<name>THM2_THADA</name>
<keyword id="KW-0002">3D-structure</keyword>
<keyword id="KW-0968">Cytoplasmic vesicle</keyword>
<keyword id="KW-1015">Disulfide bond</keyword>
<keyword id="KW-0732">Signal</keyword>
<keyword id="KW-0776">Taste-modifying protein</keyword>
<sequence>MAATTCFFFLFPFLLLLTLSRAATFEIVNRCSYTVWAAASKGDAALDAGGRQLNSGESWTINVEPGTKGGKIWARTDCYFDDSGRGICRTGDCGGLLQCKRFGRPPTTLAEFSLNQYGKDYIDISNIKGFNVPMDFSPTTRGCRGVRCAADIVGQCPAKLKAPGGGCNDACTVFQTSEYCCTTGKCGPTEYSRFFKRLCPDAFSYVLDKPTTVTCPGSSNYRVTFCPTALELEDE</sequence>
<reference key="1">
    <citation type="journal article" date="1982" name="Gene">
        <title>Cloning of cDNA encoding the sweet-tasting plant protein thaumatin and its expression in Escherichia coli.</title>
        <authorList>
            <person name="Edens L."/>
            <person name="Heslinga L."/>
            <person name="Klok R."/>
            <person name="Ledeboer A.M."/>
            <person name="Maat J."/>
            <person name="Toonen M.Y."/>
            <person name="Visser C."/>
            <person name="Verrips C.T."/>
        </authorList>
    </citation>
    <scope>NUCLEOTIDE SEQUENCE [MRNA]</scope>
    <scope>FUNCTION</scope>
</reference>
<reference key="2">
    <citation type="journal article" date="2011" name="Biochem. Biophys. Res. Commun.">
        <title>Crystal structure of the sweet-tasting protein thaumatin II at 1.27A.</title>
        <authorList>
            <person name="Masuda T."/>
            <person name="Ohta K."/>
            <person name="Tani F."/>
            <person name="Mikami B."/>
            <person name="Kitabatake N."/>
        </authorList>
    </citation>
    <scope>X-RAY CRYSTALLOGRAPHY (1.27 ANGSTROMS) OF 23-229</scope>
    <scope>DISULFIDE BONDS</scope>
</reference>
<reference key="3">
    <citation type="journal article" date="2014" name="Biochimie">
        <title>Atomic structure of recombinant thaumatin II reveals flexible conformations in two residues critical for sweetness and three consecutive glycine residues.</title>
        <authorList>
            <person name="Masuda T."/>
            <person name="Mikami B."/>
            <person name="Tani F."/>
        </authorList>
    </citation>
    <scope>X-RAY CRYSTALLOGRAPHY (0.99 ANGSTROMS) OF 23-229</scope>
    <scope>DISULFIDE BONDS</scope>
</reference>
<proteinExistence type="evidence at protein level"/>
<feature type="signal peptide" evidence="1">
    <location>
        <begin position="1"/>
        <end position="22"/>
    </location>
</feature>
<feature type="chain" id="PRO_0000034017" description="Thaumatin II">
    <location>
        <begin position="23"/>
        <end position="229"/>
    </location>
</feature>
<feature type="propeptide" id="PRO_0000034018" description="Removed in mature form" evidence="6">
    <location>
        <begin position="230"/>
        <end position="235"/>
    </location>
</feature>
<feature type="disulfide bond" evidence="2 3 4 8 9">
    <location>
        <begin position="31"/>
        <end position="226"/>
    </location>
</feature>
<feature type="disulfide bond" evidence="2 3 4 8 9">
    <location>
        <begin position="78"/>
        <end position="88"/>
    </location>
</feature>
<feature type="disulfide bond" evidence="2 3 4 8 9">
    <location>
        <begin position="93"/>
        <end position="99"/>
    </location>
</feature>
<feature type="disulfide bond" evidence="2 3 4 8 9">
    <location>
        <begin position="143"/>
        <end position="215"/>
    </location>
</feature>
<feature type="disulfide bond" evidence="2 3 4 8 9">
    <location>
        <begin position="148"/>
        <end position="199"/>
    </location>
</feature>
<feature type="disulfide bond" evidence="2 3 4 8 9">
    <location>
        <begin position="156"/>
        <end position="167"/>
    </location>
</feature>
<feature type="disulfide bond" evidence="2 3 4 8 9">
    <location>
        <begin position="171"/>
        <end position="180"/>
    </location>
</feature>
<feature type="disulfide bond" evidence="2 3 4 8 9">
    <location>
        <begin position="181"/>
        <end position="186"/>
    </location>
</feature>
<feature type="strand" evidence="10">
    <location>
        <begin position="24"/>
        <end position="29"/>
    </location>
</feature>
<feature type="strand" evidence="10">
    <location>
        <begin position="31"/>
        <end position="33"/>
    </location>
</feature>
<feature type="strand" evidence="10">
    <location>
        <begin position="35"/>
        <end position="40"/>
    </location>
</feature>
<feature type="strand" evidence="10">
    <location>
        <begin position="42"/>
        <end position="53"/>
    </location>
</feature>
<feature type="strand" evidence="10">
    <location>
        <begin position="58"/>
        <end position="62"/>
    </location>
</feature>
<feature type="strand" evidence="10">
    <location>
        <begin position="69"/>
        <end position="80"/>
    </location>
</feature>
<feature type="strand" evidence="10">
    <location>
        <begin position="84"/>
        <end position="91"/>
    </location>
</feature>
<feature type="strand" evidence="10">
    <location>
        <begin position="96"/>
        <end position="98"/>
    </location>
</feature>
<feature type="strand" evidence="10">
    <location>
        <begin position="109"/>
        <end position="116"/>
    </location>
</feature>
<feature type="strand" evidence="10">
    <location>
        <begin position="119"/>
        <end position="125"/>
    </location>
</feature>
<feature type="strand" evidence="10">
    <location>
        <begin position="130"/>
        <end position="132"/>
    </location>
</feature>
<feature type="strand" evidence="10">
    <location>
        <begin position="134"/>
        <end position="143"/>
    </location>
</feature>
<feature type="strand" evidence="10">
    <location>
        <begin position="146"/>
        <end position="148"/>
    </location>
</feature>
<feature type="helix" evidence="10">
    <location>
        <begin position="152"/>
        <end position="155"/>
    </location>
</feature>
<feature type="helix" evidence="10">
    <location>
        <begin position="158"/>
        <end position="160"/>
    </location>
</feature>
<feature type="strand" evidence="10">
    <location>
        <begin position="165"/>
        <end position="167"/>
    </location>
</feature>
<feature type="helix" evidence="10">
    <location>
        <begin position="170"/>
        <end position="174"/>
    </location>
</feature>
<feature type="helix" evidence="10">
    <location>
        <begin position="177"/>
        <end position="180"/>
    </location>
</feature>
<feature type="turn" evidence="10">
    <location>
        <begin position="181"/>
        <end position="183"/>
    </location>
</feature>
<feature type="helix" evidence="10">
    <location>
        <begin position="190"/>
        <end position="198"/>
    </location>
</feature>
<feature type="strand" evidence="10">
    <location>
        <begin position="213"/>
        <end position="216"/>
    </location>
</feature>
<feature type="strand" evidence="10">
    <location>
        <begin position="221"/>
        <end position="226"/>
    </location>
</feature>
<dbReference type="EMBL" id="J01209">
    <property type="protein sequence ID" value="AAA93095.1"/>
    <property type="molecule type" value="mRNA"/>
</dbReference>
<dbReference type="PIR" id="A03378">
    <property type="entry name" value="QTTC2"/>
</dbReference>
<dbReference type="PDB" id="3AOK">
    <property type="method" value="X-ray"/>
    <property type="resolution" value="1.27 A"/>
    <property type="chains" value="A=23-229"/>
</dbReference>
<dbReference type="PDB" id="3WOU">
    <property type="method" value="X-ray"/>
    <property type="resolution" value="0.99 A"/>
    <property type="chains" value="A=23-229"/>
</dbReference>
<dbReference type="PDBsum" id="3AOK"/>
<dbReference type="PDBsum" id="3WOU"/>
<dbReference type="SMR" id="P02884"/>
<dbReference type="Allergome" id="9233">
    <property type="allergen name" value="Tha da TLP"/>
</dbReference>
<dbReference type="EvolutionaryTrace" id="P02884"/>
<dbReference type="GO" id="GO:0031410">
    <property type="term" value="C:cytoplasmic vesicle"/>
    <property type="evidence" value="ECO:0007669"/>
    <property type="project" value="UniProtKB-KW"/>
</dbReference>
<dbReference type="CDD" id="cd09217">
    <property type="entry name" value="TLP-P"/>
    <property type="match status" value="1"/>
</dbReference>
<dbReference type="FunFam" id="2.60.110.10:FF:000003">
    <property type="entry name" value="Thaumatin I"/>
    <property type="match status" value="1"/>
</dbReference>
<dbReference type="Gene3D" id="2.60.110.10">
    <property type="entry name" value="Thaumatin"/>
    <property type="match status" value="1"/>
</dbReference>
<dbReference type="InterPro" id="IPR037176">
    <property type="entry name" value="Osmotin/thaumatin-like_sf"/>
</dbReference>
<dbReference type="InterPro" id="IPR001938">
    <property type="entry name" value="Thaumatin"/>
</dbReference>
<dbReference type="InterPro" id="IPR017949">
    <property type="entry name" value="Thaumatin_CS"/>
</dbReference>
<dbReference type="PANTHER" id="PTHR31048">
    <property type="entry name" value="OS03G0233200 PROTEIN"/>
    <property type="match status" value="1"/>
</dbReference>
<dbReference type="Pfam" id="PF00314">
    <property type="entry name" value="Thaumatin"/>
    <property type="match status" value="1"/>
</dbReference>
<dbReference type="PIRSF" id="PIRSF002703">
    <property type="entry name" value="Thaumatin"/>
    <property type="match status" value="1"/>
</dbReference>
<dbReference type="PRINTS" id="PR00347">
    <property type="entry name" value="THAUMATIN"/>
</dbReference>
<dbReference type="SMART" id="SM00205">
    <property type="entry name" value="THN"/>
    <property type="match status" value="1"/>
</dbReference>
<dbReference type="SUPFAM" id="SSF49870">
    <property type="entry name" value="Osmotin, thaumatin-like protein"/>
    <property type="match status" value="1"/>
</dbReference>
<dbReference type="PROSITE" id="PS00316">
    <property type="entry name" value="THAUMATIN_1"/>
    <property type="match status" value="1"/>
</dbReference>
<dbReference type="PROSITE" id="PS51367">
    <property type="entry name" value="THAUMATIN_2"/>
    <property type="match status" value="1"/>
</dbReference>
<comment type="function">
    <text evidence="7">Taste-modifying protein; intensely sweet-tasting. It is 100000 times sweeter than sucrose on a molar basis.</text>
</comment>
<comment type="subcellular location">
    <subcellularLocation>
        <location>Cytoplasmic vesicle</location>
    </subcellularLocation>
    <text evidence="6">Thaumatin accumulates in vesicle-like organelles.</text>
</comment>
<comment type="similarity">
    <text evidence="2">Belongs to the thaumatin family.</text>
</comment>
<accession>P02884</accession>
<protein>
    <recommendedName>
        <fullName evidence="5">Thaumatin II</fullName>
    </recommendedName>
    <alternativeName>
        <fullName evidence="6">Thaumatin-2</fullName>
    </alternativeName>
</protein>
<organism>
    <name type="scientific">Thaumatococcus daniellii</name>
    <name type="common">Katemfe</name>
    <name type="synonym">Phrynium daniellii</name>
    <dbReference type="NCBI Taxonomy" id="4621"/>
    <lineage>
        <taxon>Eukaryota</taxon>
        <taxon>Viridiplantae</taxon>
        <taxon>Streptophyta</taxon>
        <taxon>Embryophyta</taxon>
        <taxon>Tracheophyta</taxon>
        <taxon>Spermatophyta</taxon>
        <taxon>Magnoliopsida</taxon>
        <taxon>Liliopsida</taxon>
        <taxon>Zingiberales</taxon>
        <taxon>Marantaceae</taxon>
        <taxon>Thaumatococcus</taxon>
    </lineage>
</organism>
<evidence type="ECO:0000255" key="1"/>
<evidence type="ECO:0000255" key="2">
    <source>
        <dbReference type="PROSITE-ProRule" id="PRU00699"/>
    </source>
</evidence>
<evidence type="ECO:0000269" key="3">
    <source>
    </source>
</evidence>
<evidence type="ECO:0000269" key="4">
    <source>
    </source>
</evidence>
<evidence type="ECO:0000303" key="5">
    <source>
    </source>
</evidence>
<evidence type="ECO:0000305" key="6"/>
<evidence type="ECO:0000305" key="7">
    <source>
    </source>
</evidence>
<evidence type="ECO:0007744" key="8">
    <source>
        <dbReference type="PDB" id="3AOK"/>
    </source>
</evidence>
<evidence type="ECO:0007744" key="9">
    <source>
        <dbReference type="PDB" id="3WOU"/>
    </source>
</evidence>
<evidence type="ECO:0007829" key="10">
    <source>
        <dbReference type="PDB" id="3WOU"/>
    </source>
</evidence>